<protein>
    <recommendedName>
        <fullName>Uncharacterized protein MT3212</fullName>
    </recommendedName>
</protein>
<name>Y3127_MYCTO</name>
<comment type="induction">
    <text evidence="2">A member of the dormancy regulon. Induced in response to reduced oxygen tension (hypoxia) and low levels of nitric oxide (NO).</text>
</comment>
<comment type="sequence caution" evidence="3">
    <conflict type="erroneous initiation">
        <sequence resource="EMBL-CDS" id="AAK47552"/>
    </conflict>
</comment>
<organism>
    <name type="scientific">Mycobacterium tuberculosis (strain CDC 1551 / Oshkosh)</name>
    <dbReference type="NCBI Taxonomy" id="83331"/>
    <lineage>
        <taxon>Bacteria</taxon>
        <taxon>Bacillati</taxon>
        <taxon>Actinomycetota</taxon>
        <taxon>Actinomycetes</taxon>
        <taxon>Mycobacteriales</taxon>
        <taxon>Mycobacteriaceae</taxon>
        <taxon>Mycobacterium</taxon>
        <taxon>Mycobacterium tuberculosis complex</taxon>
    </lineage>
</organism>
<accession>P9WL06</accession>
<accession>L0TBX4</accession>
<accession>O05800</accession>
<accession>Q7D629</accession>
<evidence type="ECO:0000256" key="1">
    <source>
        <dbReference type="SAM" id="MobiDB-lite"/>
    </source>
</evidence>
<evidence type="ECO:0000269" key="2">
    <source>
    </source>
</evidence>
<evidence type="ECO:0000305" key="3"/>
<sequence length="344" mass="38521">MLKNAVLLACRAPSVHNSQPWRWVAESGSEHTTVHLFVNRHRTVPATDHSGRQAIISCGAVLDHLRIAMTAAHWQANITRFPQPNQPDQLATVEFSPIDHVTAGQRNRAQAILQRRTDRLPFDSPMYWHLFEPALRDAVDKDVAMLDVVSDDQRTRLVVASQLSEVLRRDDPYYHAELEWWTSPFVLAHGVPPDTLASDAERLRVDLGRDFPVRSYQNRRAELADDRSKVLVLSTPSDTRADALRCGEVLSTILLECTMAGMATCTLTHLIESSDSRDIVRGLTRQRGEPQALIRVGIAPPLAAVPAPTPRRPLDSVLQIRQTPEKGRNASDRNARETGWFSPP</sequence>
<reference key="1">
    <citation type="journal article" date="2002" name="J. Bacteriol.">
        <title>Whole-genome comparison of Mycobacterium tuberculosis clinical and laboratory strains.</title>
        <authorList>
            <person name="Fleischmann R.D."/>
            <person name="Alland D."/>
            <person name="Eisen J.A."/>
            <person name="Carpenter L."/>
            <person name="White O."/>
            <person name="Peterson J.D."/>
            <person name="DeBoy R.T."/>
            <person name="Dodson R.J."/>
            <person name="Gwinn M.L."/>
            <person name="Haft D.H."/>
            <person name="Hickey E.K."/>
            <person name="Kolonay J.F."/>
            <person name="Nelson W.C."/>
            <person name="Umayam L.A."/>
            <person name="Ermolaeva M.D."/>
            <person name="Salzberg S.L."/>
            <person name="Delcher A."/>
            <person name="Utterback T.R."/>
            <person name="Weidman J.F."/>
            <person name="Khouri H.M."/>
            <person name="Gill J."/>
            <person name="Mikula A."/>
            <person name="Bishai W."/>
            <person name="Jacobs W.R. Jr."/>
            <person name="Venter J.C."/>
            <person name="Fraser C.M."/>
        </authorList>
    </citation>
    <scope>NUCLEOTIDE SEQUENCE [LARGE SCALE GENOMIC DNA]</scope>
    <source>
        <strain>CDC 1551 / Oshkosh</strain>
    </source>
</reference>
<reference key="2">
    <citation type="journal article" date="2003" name="J. Exp. Med.">
        <title>Inhibition of respiration by nitric oxide induces a Mycobacterium tuberculosis dormancy program.</title>
        <authorList>
            <person name="Voskuil M.I."/>
            <person name="Schnappinger D."/>
            <person name="Visconti K.C."/>
            <person name="Harrell M.I."/>
            <person name="Dolganov G.M."/>
            <person name="Sherman D.R."/>
            <person name="Schoolnik G.K."/>
        </authorList>
    </citation>
    <scope>INDUCTION BY NITRIC OXIDE (NO) AND BY HYPOXIA</scope>
    <scope>DORMANCY REGULON</scope>
    <source>
        <strain>CDC 1551 / Oshkosh</strain>
    </source>
</reference>
<keyword id="KW-1185">Reference proteome</keyword>
<gene>
    <name type="ordered locus">MT3212</name>
</gene>
<dbReference type="EMBL" id="AE000516">
    <property type="protein sequence ID" value="AAK47552.1"/>
    <property type="status" value="ALT_INIT"/>
    <property type="molecule type" value="Genomic_DNA"/>
</dbReference>
<dbReference type="PIR" id="F70922">
    <property type="entry name" value="F70922"/>
</dbReference>
<dbReference type="RefSeq" id="WP_003416354.1">
    <property type="nucleotide sequence ID" value="NZ_KK341227.1"/>
</dbReference>
<dbReference type="SMR" id="P9WL06"/>
<dbReference type="KEGG" id="mtc:MT3212"/>
<dbReference type="PATRIC" id="fig|83331.31.peg.3461"/>
<dbReference type="HOGENOM" id="CLU_051479_1_0_11"/>
<dbReference type="Proteomes" id="UP000001020">
    <property type="component" value="Chromosome"/>
</dbReference>
<dbReference type="GO" id="GO:0016491">
    <property type="term" value="F:oxidoreductase activity"/>
    <property type="evidence" value="ECO:0007669"/>
    <property type="project" value="InterPro"/>
</dbReference>
<dbReference type="FunFam" id="3.40.109.10:FF:000014">
    <property type="entry name" value="Putative NAD(P)H nitroreductase acg"/>
    <property type="match status" value="1"/>
</dbReference>
<dbReference type="Gene3D" id="3.40.109.10">
    <property type="entry name" value="NADH Oxidase"/>
    <property type="match status" value="1"/>
</dbReference>
<dbReference type="InterPro" id="IPR000415">
    <property type="entry name" value="Nitroreductase-like"/>
</dbReference>
<dbReference type="InterPro" id="IPR050627">
    <property type="entry name" value="Nitroreductase/BluB"/>
</dbReference>
<dbReference type="NCBIfam" id="NF047509">
    <property type="entry name" value="Rv3131_FMN_oxido"/>
    <property type="match status" value="1"/>
</dbReference>
<dbReference type="PANTHER" id="PTHR23026:SF123">
    <property type="entry name" value="NAD(P)H NITROREDUCTASE RV3131-RELATED"/>
    <property type="match status" value="1"/>
</dbReference>
<dbReference type="PANTHER" id="PTHR23026">
    <property type="entry name" value="NADPH NITROREDUCTASE"/>
    <property type="match status" value="1"/>
</dbReference>
<dbReference type="SUPFAM" id="SSF55469">
    <property type="entry name" value="FMN-dependent nitroreductase-like"/>
    <property type="match status" value="2"/>
</dbReference>
<feature type="chain" id="PRO_0000427562" description="Uncharacterized protein MT3212">
    <location>
        <begin position="1"/>
        <end position="344"/>
    </location>
</feature>
<feature type="region of interest" description="Disordered" evidence="1">
    <location>
        <begin position="304"/>
        <end position="344"/>
    </location>
</feature>
<feature type="compositionally biased region" description="Basic and acidic residues" evidence="1">
    <location>
        <begin position="323"/>
        <end position="336"/>
    </location>
</feature>
<proteinExistence type="evidence at transcript level"/>